<comment type="function">
    <text evidence="1">The 26S proteasome is involved in the ATP-dependent degradation of ubiquitinated proteins. The regulatory (or ATPase) complex confers ATP dependency and substrate specificity to the 26S complex (By similarity).</text>
</comment>
<comment type="subcellular location">
    <subcellularLocation>
        <location evidence="3">Cytoplasm</location>
    </subcellularLocation>
    <subcellularLocation>
        <location evidence="3">Nucleus</location>
    </subcellularLocation>
</comment>
<comment type="similarity">
    <text evidence="3">Belongs to the AAA ATPase family.</text>
</comment>
<protein>
    <recommendedName>
        <fullName>26S proteasome regulatory subunit 6B homolog</fullName>
    </recommendedName>
</protein>
<sequence>MNSTEEIDLYNRWKALERQLEMLDLQEGFIKEDCKSLKRELIRAQEEVKRIQSVPLVIGQFLEAIDQNTAIVGSTTGSNYVVRILSTLDRELLKPSASVALQRHSNALVDILPPEADSSISMLRPDERPDVSYADVGGLDVQKQEVREAVELPLTQGDLYRQIGIDPPRGVLLYGPPGTGKTMLVKAVANSTAANFIRVVGSEFVQKYLGEGPRMVRDVFRMARENAPAIIFIDEIDAIATKRFDAQTGADREVQRILIELLTQMDGFDQGANVKVIMATNRADTLDPALLRPGRLDRKIEFPSYRDRRQRRLVFQTITAKMLLSPEVDLDTFIMRPDASSGAQIAAIMQDAGLLAVRKSRGVILQSDIEEAYARAVKPTDMEQFAFYK</sequence>
<keyword id="KW-0067">ATP-binding</keyword>
<keyword id="KW-0963">Cytoplasm</keyword>
<keyword id="KW-0547">Nucleotide-binding</keyword>
<keyword id="KW-0539">Nucleus</keyword>
<keyword id="KW-0647">Proteasome</keyword>
<keyword id="KW-1185">Reference proteome</keyword>
<reference key="1">
    <citation type="journal article" date="2002" name="Nature">
        <title>The genome sequence of Schizosaccharomyces pombe.</title>
        <authorList>
            <person name="Wood V."/>
            <person name="Gwilliam R."/>
            <person name="Rajandream M.A."/>
            <person name="Lyne M.H."/>
            <person name="Lyne R."/>
            <person name="Stewart A."/>
            <person name="Sgouros J.G."/>
            <person name="Peat N."/>
            <person name="Hayles J."/>
            <person name="Baker S.G."/>
            <person name="Basham D."/>
            <person name="Bowman S."/>
            <person name="Brooks K."/>
            <person name="Brown D."/>
            <person name="Brown S."/>
            <person name="Chillingworth T."/>
            <person name="Churcher C.M."/>
            <person name="Collins M."/>
            <person name="Connor R."/>
            <person name="Cronin A."/>
            <person name="Davis P."/>
            <person name="Feltwell T."/>
            <person name="Fraser A."/>
            <person name="Gentles S."/>
            <person name="Goble A."/>
            <person name="Hamlin N."/>
            <person name="Harris D.E."/>
            <person name="Hidalgo J."/>
            <person name="Hodgson G."/>
            <person name="Holroyd S."/>
            <person name="Hornsby T."/>
            <person name="Howarth S."/>
            <person name="Huckle E.J."/>
            <person name="Hunt S."/>
            <person name="Jagels K."/>
            <person name="James K.D."/>
            <person name="Jones L."/>
            <person name="Jones M."/>
            <person name="Leather S."/>
            <person name="McDonald S."/>
            <person name="McLean J."/>
            <person name="Mooney P."/>
            <person name="Moule S."/>
            <person name="Mungall K.L."/>
            <person name="Murphy L.D."/>
            <person name="Niblett D."/>
            <person name="Odell C."/>
            <person name="Oliver K."/>
            <person name="O'Neil S."/>
            <person name="Pearson D."/>
            <person name="Quail M.A."/>
            <person name="Rabbinowitsch E."/>
            <person name="Rutherford K.M."/>
            <person name="Rutter S."/>
            <person name="Saunders D."/>
            <person name="Seeger K."/>
            <person name="Sharp S."/>
            <person name="Skelton J."/>
            <person name="Simmonds M.N."/>
            <person name="Squares R."/>
            <person name="Squares S."/>
            <person name="Stevens K."/>
            <person name="Taylor K."/>
            <person name="Taylor R.G."/>
            <person name="Tivey A."/>
            <person name="Walsh S.V."/>
            <person name="Warren T."/>
            <person name="Whitehead S."/>
            <person name="Woodward J.R."/>
            <person name="Volckaert G."/>
            <person name="Aert R."/>
            <person name="Robben J."/>
            <person name="Grymonprez B."/>
            <person name="Weltjens I."/>
            <person name="Vanstreels E."/>
            <person name="Rieger M."/>
            <person name="Schaefer M."/>
            <person name="Mueller-Auer S."/>
            <person name="Gabel C."/>
            <person name="Fuchs M."/>
            <person name="Duesterhoeft A."/>
            <person name="Fritzc C."/>
            <person name="Holzer E."/>
            <person name="Moestl D."/>
            <person name="Hilbert H."/>
            <person name="Borzym K."/>
            <person name="Langer I."/>
            <person name="Beck A."/>
            <person name="Lehrach H."/>
            <person name="Reinhardt R."/>
            <person name="Pohl T.M."/>
            <person name="Eger P."/>
            <person name="Zimmermann W."/>
            <person name="Wedler H."/>
            <person name="Wambutt R."/>
            <person name="Purnelle B."/>
            <person name="Goffeau A."/>
            <person name="Cadieu E."/>
            <person name="Dreano S."/>
            <person name="Gloux S."/>
            <person name="Lelaure V."/>
            <person name="Mottier S."/>
            <person name="Galibert F."/>
            <person name="Aves S.J."/>
            <person name="Xiang Z."/>
            <person name="Hunt C."/>
            <person name="Moore K."/>
            <person name="Hurst S.M."/>
            <person name="Lucas M."/>
            <person name="Rochet M."/>
            <person name="Gaillardin C."/>
            <person name="Tallada V.A."/>
            <person name="Garzon A."/>
            <person name="Thode G."/>
            <person name="Daga R.R."/>
            <person name="Cruzado L."/>
            <person name="Jimenez J."/>
            <person name="Sanchez M."/>
            <person name="del Rey F."/>
            <person name="Benito J."/>
            <person name="Dominguez A."/>
            <person name="Revuelta J.L."/>
            <person name="Moreno S."/>
            <person name="Armstrong J."/>
            <person name="Forsburg S.L."/>
            <person name="Cerutti L."/>
            <person name="Lowe T."/>
            <person name="McCombie W.R."/>
            <person name="Paulsen I."/>
            <person name="Potashkin J."/>
            <person name="Shpakovski G.V."/>
            <person name="Ussery D."/>
            <person name="Barrell B.G."/>
            <person name="Nurse P."/>
        </authorList>
    </citation>
    <scope>NUCLEOTIDE SEQUENCE [LARGE SCALE GENOMIC DNA]</scope>
    <source>
        <strain>972 / ATCC 24843</strain>
    </source>
</reference>
<evidence type="ECO:0000250" key="1"/>
<evidence type="ECO:0000255" key="2"/>
<evidence type="ECO:0000305" key="3"/>
<organism>
    <name type="scientific">Schizosaccharomyces pombe (strain 972 / ATCC 24843)</name>
    <name type="common">Fission yeast</name>
    <dbReference type="NCBI Taxonomy" id="284812"/>
    <lineage>
        <taxon>Eukaryota</taxon>
        <taxon>Fungi</taxon>
        <taxon>Dikarya</taxon>
        <taxon>Ascomycota</taxon>
        <taxon>Taphrinomycotina</taxon>
        <taxon>Schizosaccharomycetes</taxon>
        <taxon>Schizosaccharomycetales</taxon>
        <taxon>Schizosaccharomycetaceae</taxon>
        <taxon>Schizosaccharomyces</taxon>
    </lineage>
</organism>
<name>PRS6B_SCHPO</name>
<dbReference type="EMBL" id="CU329672">
    <property type="protein sequence ID" value="CAA21189.1"/>
    <property type="molecule type" value="Genomic_DNA"/>
</dbReference>
<dbReference type="PIR" id="T41420">
    <property type="entry name" value="T41420"/>
</dbReference>
<dbReference type="RefSeq" id="NP_588437.1">
    <property type="nucleotide sequence ID" value="NM_001023428.2"/>
</dbReference>
<dbReference type="SMR" id="O74894"/>
<dbReference type="BioGRID" id="276101">
    <property type="interactions" value="31"/>
</dbReference>
<dbReference type="ComplexPortal" id="CPX-9077">
    <property type="entry name" value="26S proteasome complex"/>
</dbReference>
<dbReference type="FunCoup" id="O74894">
    <property type="interactions" value="559"/>
</dbReference>
<dbReference type="STRING" id="284812.O74894"/>
<dbReference type="iPTMnet" id="O74894"/>
<dbReference type="PaxDb" id="4896-SPCC576.10c.1"/>
<dbReference type="EnsemblFungi" id="SPCC576.10c.1">
    <property type="protein sequence ID" value="SPCC576.10c.1:pep"/>
    <property type="gene ID" value="SPCC576.10c"/>
</dbReference>
<dbReference type="GeneID" id="2539539"/>
<dbReference type="KEGG" id="spo:2539539"/>
<dbReference type="PomBase" id="SPCC576.10c">
    <property type="gene designation" value="rpt3"/>
</dbReference>
<dbReference type="VEuPathDB" id="FungiDB:SPCC576.10c"/>
<dbReference type="eggNOG" id="KOG0727">
    <property type="taxonomic scope" value="Eukaryota"/>
</dbReference>
<dbReference type="HOGENOM" id="CLU_000688_2_0_1"/>
<dbReference type="InParanoid" id="O74894"/>
<dbReference type="OMA" id="QDIGGMD"/>
<dbReference type="PhylomeDB" id="O74894"/>
<dbReference type="Reactome" id="R-SPO-1236978">
    <property type="pathway name" value="Cross-presentation of soluble exogenous antigens (endosomes)"/>
</dbReference>
<dbReference type="Reactome" id="R-SPO-350562">
    <property type="pathway name" value="Regulation of ornithine decarboxylase (ODC)"/>
</dbReference>
<dbReference type="Reactome" id="R-SPO-5687128">
    <property type="pathway name" value="MAPK6/MAPK4 signaling"/>
</dbReference>
<dbReference type="Reactome" id="R-SPO-5689603">
    <property type="pathway name" value="UCH proteinases"/>
</dbReference>
<dbReference type="Reactome" id="R-SPO-5689880">
    <property type="pathway name" value="Ub-specific processing proteases"/>
</dbReference>
<dbReference type="Reactome" id="R-SPO-68949">
    <property type="pathway name" value="Orc1 removal from chromatin"/>
</dbReference>
<dbReference type="Reactome" id="R-SPO-69017">
    <property type="pathway name" value="CDK-mediated phosphorylation and removal of Cdc6"/>
</dbReference>
<dbReference type="Reactome" id="R-SPO-69601">
    <property type="pathway name" value="Ubiquitin Mediated Degradation of Phosphorylated Cdc25A"/>
</dbReference>
<dbReference type="Reactome" id="R-SPO-75815">
    <property type="pathway name" value="Ubiquitin-dependent degradation of Cyclin D"/>
</dbReference>
<dbReference type="Reactome" id="R-SPO-8854050">
    <property type="pathway name" value="FBXL7 down-regulates AURKA during mitotic entry and in early mitosis"/>
</dbReference>
<dbReference type="Reactome" id="R-SPO-8948751">
    <property type="pathway name" value="Regulation of PTEN stability and activity"/>
</dbReference>
<dbReference type="Reactome" id="R-SPO-8951664">
    <property type="pathway name" value="Neddylation"/>
</dbReference>
<dbReference type="Reactome" id="R-SPO-9755511">
    <property type="pathway name" value="KEAP1-NFE2L2 pathway"/>
</dbReference>
<dbReference type="Reactome" id="R-SPO-983168">
    <property type="pathway name" value="Antigen processing: Ubiquitination &amp; Proteasome degradation"/>
</dbReference>
<dbReference type="Reactome" id="R-SPO-9907900">
    <property type="pathway name" value="Proteasome assembly"/>
</dbReference>
<dbReference type="PRO" id="PR:O74894"/>
<dbReference type="Proteomes" id="UP000002485">
    <property type="component" value="Chromosome III"/>
</dbReference>
<dbReference type="GO" id="GO:0000785">
    <property type="term" value="C:chromatin"/>
    <property type="evidence" value="ECO:0000314"/>
    <property type="project" value="PomBase"/>
</dbReference>
<dbReference type="GO" id="GO:0005737">
    <property type="term" value="C:cytoplasm"/>
    <property type="evidence" value="ECO:0007005"/>
    <property type="project" value="PomBase"/>
</dbReference>
<dbReference type="GO" id="GO:0005829">
    <property type="term" value="C:cytosol"/>
    <property type="evidence" value="ECO:0007005"/>
    <property type="project" value="PomBase"/>
</dbReference>
<dbReference type="GO" id="GO:0034399">
    <property type="term" value="C:nuclear periphery"/>
    <property type="evidence" value="ECO:0000314"/>
    <property type="project" value="PomBase"/>
</dbReference>
<dbReference type="GO" id="GO:0008540">
    <property type="term" value="C:proteasome regulatory particle, base subcomplex"/>
    <property type="evidence" value="ECO:0000314"/>
    <property type="project" value="PomBase"/>
</dbReference>
<dbReference type="GO" id="GO:0005524">
    <property type="term" value="F:ATP binding"/>
    <property type="evidence" value="ECO:0007669"/>
    <property type="project" value="UniProtKB-KW"/>
</dbReference>
<dbReference type="GO" id="GO:0016887">
    <property type="term" value="F:ATP hydrolysis activity"/>
    <property type="evidence" value="ECO:0000303"/>
    <property type="project" value="PomBase"/>
</dbReference>
<dbReference type="GO" id="GO:0036402">
    <property type="term" value="F:proteasome-activating activity"/>
    <property type="evidence" value="ECO:0000318"/>
    <property type="project" value="GO_Central"/>
</dbReference>
<dbReference type="GO" id="GO:0043161">
    <property type="term" value="P:proteasome-mediated ubiquitin-dependent protein catabolic process"/>
    <property type="evidence" value="ECO:0000318"/>
    <property type="project" value="GO_Central"/>
</dbReference>
<dbReference type="FunFam" id="2.40.50.140:FF:000046">
    <property type="entry name" value="26S protease regulatory subunit 6B"/>
    <property type="match status" value="1"/>
</dbReference>
<dbReference type="FunFam" id="3.40.50.300:FF:000033">
    <property type="entry name" value="26S protease regulatory subunit 6B"/>
    <property type="match status" value="1"/>
</dbReference>
<dbReference type="Gene3D" id="1.10.8.60">
    <property type="match status" value="1"/>
</dbReference>
<dbReference type="Gene3D" id="2.40.50.140">
    <property type="entry name" value="Nucleic acid-binding proteins"/>
    <property type="match status" value="1"/>
</dbReference>
<dbReference type="Gene3D" id="3.40.50.300">
    <property type="entry name" value="P-loop containing nucleotide triphosphate hydrolases"/>
    <property type="match status" value="1"/>
</dbReference>
<dbReference type="InterPro" id="IPR050221">
    <property type="entry name" value="26S_Proteasome_ATPase"/>
</dbReference>
<dbReference type="InterPro" id="IPR003593">
    <property type="entry name" value="AAA+_ATPase"/>
</dbReference>
<dbReference type="InterPro" id="IPR003959">
    <property type="entry name" value="ATPase_AAA_core"/>
</dbReference>
<dbReference type="InterPro" id="IPR003960">
    <property type="entry name" value="ATPase_AAA_CS"/>
</dbReference>
<dbReference type="InterPro" id="IPR012340">
    <property type="entry name" value="NA-bd_OB-fold"/>
</dbReference>
<dbReference type="InterPro" id="IPR027417">
    <property type="entry name" value="P-loop_NTPase"/>
</dbReference>
<dbReference type="InterPro" id="IPR032501">
    <property type="entry name" value="Prot_ATP_ID_OB_2nd"/>
</dbReference>
<dbReference type="PANTHER" id="PTHR23073">
    <property type="entry name" value="26S PROTEASOME REGULATORY SUBUNIT"/>
    <property type="match status" value="1"/>
</dbReference>
<dbReference type="Pfam" id="PF00004">
    <property type="entry name" value="AAA"/>
    <property type="match status" value="1"/>
</dbReference>
<dbReference type="Pfam" id="PF16450">
    <property type="entry name" value="Prot_ATP_ID_OB_C"/>
    <property type="match status" value="1"/>
</dbReference>
<dbReference type="SMART" id="SM00382">
    <property type="entry name" value="AAA"/>
    <property type="match status" value="1"/>
</dbReference>
<dbReference type="SUPFAM" id="SSF52540">
    <property type="entry name" value="P-loop containing nucleoside triphosphate hydrolases"/>
    <property type="match status" value="1"/>
</dbReference>
<dbReference type="PROSITE" id="PS00674">
    <property type="entry name" value="AAA"/>
    <property type="match status" value="1"/>
</dbReference>
<feature type="chain" id="PRO_0000084696" description="26S proteasome regulatory subunit 6B homolog">
    <location>
        <begin position="1"/>
        <end position="389"/>
    </location>
</feature>
<feature type="binding site" evidence="2">
    <location>
        <begin position="175"/>
        <end position="182"/>
    </location>
    <ligand>
        <name>ATP</name>
        <dbReference type="ChEBI" id="CHEBI:30616"/>
    </ligand>
</feature>
<proteinExistence type="inferred from homology"/>
<accession>O74894</accession>
<gene>
    <name type="primary">rpt3</name>
    <name type="ORF">SPCC576.10c</name>
</gene>